<evidence type="ECO:0000250" key="1"/>
<evidence type="ECO:0000305" key="2"/>
<sequence length="20" mass="2182">ANNAGARKAIRKIEARTEVN</sequence>
<reference key="1">
    <citation type="journal article" date="1995" name="Int. J. Syst. Bacteriol.">
        <title>Comparative ribosomal protein sequence analyses of a phylogenetically defined genus, Pseudomonas, and its relatives.</title>
        <authorList>
            <person name="Ochi K."/>
        </authorList>
    </citation>
    <scope>PROTEIN SEQUENCE</scope>
    <source>
        <strain>ATCC 11568 / DSM 7234 / JCM 2788 / NCIB 9393 / NCTC 8545</strain>
    </source>
</reference>
<organism>
    <name type="scientific">Brevundimonas diminuta</name>
    <name type="common">Pseudomonas diminuta</name>
    <dbReference type="NCBI Taxonomy" id="293"/>
    <lineage>
        <taxon>Bacteria</taxon>
        <taxon>Pseudomonadati</taxon>
        <taxon>Pseudomonadota</taxon>
        <taxon>Alphaproteobacteria</taxon>
        <taxon>Caulobacterales</taxon>
        <taxon>Caulobacteraceae</taxon>
        <taxon>Brevundimonas</taxon>
    </lineage>
</organism>
<gene>
    <name type="primary">rpsT</name>
</gene>
<feature type="chain" id="PRO_0000223995" description="Small ribosomal subunit protein bS20">
    <location>
        <begin position="1"/>
        <end position="20" status="greater than"/>
    </location>
</feature>
<feature type="non-terminal residue">
    <location>
        <position position="20"/>
    </location>
</feature>
<accession>Q9R4P7</accession>
<protein>
    <recommendedName>
        <fullName evidence="2">Small ribosomal subunit protein bS20</fullName>
    </recommendedName>
    <alternativeName>
        <fullName>30S ribosomal protein S20</fullName>
    </alternativeName>
</protein>
<name>RS20_BREDI</name>
<dbReference type="STRING" id="293.GCA_000988015_02487"/>
<dbReference type="GO" id="GO:1990904">
    <property type="term" value="C:ribonucleoprotein complex"/>
    <property type="evidence" value="ECO:0007669"/>
    <property type="project" value="UniProtKB-KW"/>
</dbReference>
<dbReference type="GO" id="GO:0005840">
    <property type="term" value="C:ribosome"/>
    <property type="evidence" value="ECO:0007669"/>
    <property type="project" value="UniProtKB-KW"/>
</dbReference>
<dbReference type="GO" id="GO:0019843">
    <property type="term" value="F:rRNA binding"/>
    <property type="evidence" value="ECO:0007669"/>
    <property type="project" value="UniProtKB-KW"/>
</dbReference>
<proteinExistence type="evidence at protein level"/>
<comment type="function">
    <text evidence="1">Binds directly to 16S ribosomal RNA.</text>
</comment>
<comment type="similarity">
    <text evidence="2">Belongs to the bacterial ribosomal protein bS20 family.</text>
</comment>
<keyword id="KW-0903">Direct protein sequencing</keyword>
<keyword id="KW-0687">Ribonucleoprotein</keyword>
<keyword id="KW-0689">Ribosomal protein</keyword>
<keyword id="KW-0694">RNA-binding</keyword>
<keyword id="KW-0699">rRNA-binding</keyword>